<dbReference type="EMBL" id="AF077336">
    <property type="protein sequence ID" value="AAD46092.1"/>
    <property type="molecule type" value="Genomic_DNA"/>
</dbReference>
<dbReference type="SMR" id="Q9QSQ9"/>
<dbReference type="Proteomes" id="UP000007418">
    <property type="component" value="Segment"/>
</dbReference>
<dbReference type="GO" id="GO:0030430">
    <property type="term" value="C:host cell cytoplasm"/>
    <property type="evidence" value="ECO:0007669"/>
    <property type="project" value="UniProtKB-SubCell"/>
</dbReference>
<dbReference type="GO" id="GO:0044196">
    <property type="term" value="C:host cell nucleolus"/>
    <property type="evidence" value="ECO:0007669"/>
    <property type="project" value="UniProtKB-SubCell"/>
</dbReference>
<dbReference type="GO" id="GO:0003700">
    <property type="term" value="F:DNA-binding transcription factor activity"/>
    <property type="evidence" value="ECO:0007669"/>
    <property type="project" value="UniProtKB-UniRule"/>
</dbReference>
<dbReference type="GO" id="GO:0003723">
    <property type="term" value="F:RNA binding"/>
    <property type="evidence" value="ECO:0007669"/>
    <property type="project" value="UniProtKB-UniRule"/>
</dbReference>
<dbReference type="GO" id="GO:0051028">
    <property type="term" value="P:mRNA transport"/>
    <property type="evidence" value="ECO:0007669"/>
    <property type="project" value="UniProtKB-UniRule"/>
</dbReference>
<dbReference type="GO" id="GO:0016032">
    <property type="term" value="P:viral process"/>
    <property type="evidence" value="ECO:0007669"/>
    <property type="project" value="UniProtKB-UniRule"/>
</dbReference>
<dbReference type="Gene3D" id="6.10.140.630">
    <property type="match status" value="1"/>
</dbReference>
<dbReference type="HAMAP" id="MF_04077">
    <property type="entry name" value="REV_HIV1"/>
    <property type="match status" value="1"/>
</dbReference>
<dbReference type="InterPro" id="IPR000625">
    <property type="entry name" value="REV_protein"/>
</dbReference>
<dbReference type="Pfam" id="PF00424">
    <property type="entry name" value="REV"/>
    <property type="match status" value="1"/>
</dbReference>
<organism>
    <name type="scientific">Human immunodeficiency virus type 1 group M subtype F1 (isolate VI850)</name>
    <name type="common">HIV-1</name>
    <dbReference type="NCBI Taxonomy" id="388813"/>
    <lineage>
        <taxon>Viruses</taxon>
        <taxon>Riboviria</taxon>
        <taxon>Pararnavirae</taxon>
        <taxon>Artverviricota</taxon>
        <taxon>Revtraviricetes</taxon>
        <taxon>Ortervirales</taxon>
        <taxon>Retroviridae</taxon>
        <taxon>Orthoretrovirinae</taxon>
        <taxon>Lentivirus</taxon>
        <taxon>Human immunodeficiency virus type 1</taxon>
    </lineage>
</organism>
<name>REV_HV1VI</name>
<reference key="1">
    <citation type="journal article" date="2000" name="Virology">
        <title>Virtually full-length subtype F and F/D recombinant HIV-1 from Africa and South America.</title>
        <authorList>
            <person name="Laukkanen T."/>
            <person name="Carr J.K."/>
            <person name="Janssens W."/>
            <person name="Liitsola K."/>
            <person name="Gotte D."/>
            <person name="McCutchan F.E."/>
            <person name="Op de Coul E."/>
            <person name="Cornelissen M."/>
            <person name="Heyndrickx L."/>
            <person name="van der Groen G."/>
            <person name="Salminen M.O."/>
        </authorList>
    </citation>
    <scope>NUCLEOTIDE SEQUENCE [GENOMIC DNA]</scope>
</reference>
<reference key="2">
    <citation type="journal article" date="1999" name="Arch. Biochem. Biophys.">
        <title>The ins and outs of HIV Rev.</title>
        <authorList>
            <person name="Hope T.J."/>
        </authorList>
    </citation>
    <scope>REVIEW</scope>
</reference>
<protein>
    <recommendedName>
        <fullName evidence="1">Protein Rev</fullName>
    </recommendedName>
    <alternativeName>
        <fullName evidence="1">ART/TRS</fullName>
    </alternativeName>
    <alternativeName>
        <fullName evidence="1">Anti-repression transactivator</fullName>
    </alternativeName>
    <alternativeName>
        <fullName evidence="1">Regulator of expression of viral proteins</fullName>
    </alternativeName>
</protein>
<evidence type="ECO:0000255" key="1">
    <source>
        <dbReference type="HAMAP-Rule" id="MF_04077"/>
    </source>
</evidence>
<evidence type="ECO:0000256" key="2">
    <source>
        <dbReference type="SAM" id="MobiDB-lite"/>
    </source>
</evidence>
<proteinExistence type="inferred from homology"/>
<organismHost>
    <name type="scientific">Homo sapiens</name>
    <name type="common">Human</name>
    <dbReference type="NCBI Taxonomy" id="9606"/>
</organismHost>
<feature type="chain" id="PRO_0000245006" description="Protein Rev">
    <location>
        <begin position="1"/>
        <end position="116"/>
    </location>
</feature>
<feature type="region of interest" description="Homomultimerization" evidence="1">
    <location>
        <begin position="18"/>
        <end position="26"/>
    </location>
</feature>
<feature type="region of interest" description="Disordered" evidence="2">
    <location>
        <begin position="27"/>
        <end position="47"/>
    </location>
</feature>
<feature type="region of interest" description="Disordered" evidence="2">
    <location>
        <begin position="87"/>
        <end position="116"/>
    </location>
</feature>
<feature type="short sequence motif" description="Nuclear localization signal and RNA-binding (RRE)" evidence="1">
    <location>
        <begin position="34"/>
        <end position="50"/>
    </location>
</feature>
<feature type="short sequence motif" description="Nuclear export signal and binding to XPO1" evidence="1">
    <location>
        <begin position="73"/>
        <end position="84"/>
    </location>
</feature>
<feature type="compositionally biased region" description="Basic residues" evidence="2">
    <location>
        <begin position="36"/>
        <end position="47"/>
    </location>
</feature>
<feature type="modified residue" description="Phosphoserine; by host CK2" evidence="1">
    <location>
        <position position="5"/>
    </location>
</feature>
<feature type="modified residue" description="Phosphoserine; by host CK2" evidence="1">
    <location>
        <position position="8"/>
    </location>
</feature>
<feature type="modified residue" description="Phosphoserine; by host" evidence="1">
    <location>
        <position position="99"/>
    </location>
</feature>
<comment type="function">
    <text evidence="1">Escorts unspliced or incompletely spliced viral pre-mRNAs (late transcripts) out of the nucleus of infected cells. These pre-mRNAs carry a recognition sequence called Rev responsive element (RRE) located in the env gene, that is not present in fully spliced viral mRNAs (early transcripts). This function is essential since most viral proteins are translated from unspliced or partially spliced pre-mRNAs which cannot exit the nucleus by the pathway used by fully processed cellular mRNAs. Rev itself is translated from a fully spliced mRNA that readily exits the nucleus. Rev's nuclear localization signal (NLS) binds directly to KPNB1/Importin beta-1 without previous binding to KPNA1/Importin alpha-1. KPNB1 binds to the GDP bound form of RAN (Ran-GDP) and targets Rev to the nucleus. In the nucleus, the conversion from Ran-GDP to Ran-GTP dissociates Rev from KPNB1 and allows Rev's binding to the RRE in viral pre-mRNAs. Rev multimerization on the RRE via cooperative assembly exposes its nuclear export signal (NES) to the surface. Rev can then form a complex with XPO1/CRM1 and Ran-GTP, leading to nuclear export of the complex. Conversion from Ran-GTP to Ran-GDP mediates dissociation of the Rev/RRE/XPO1/RAN complex, so that Rev can return to the nucleus for a subsequent round of export. Beside KPNB1, also seems to interact with TNPO1/Transportin-1, RANBP5/IPO5 and IPO7/RANBP7 for nuclear import. The nucleoporin-like HRB/RIP is an essential cofactor that probably indirectly interacts with Rev to release HIV RNAs from the perinuclear region to the cytoplasm.</text>
</comment>
<comment type="subunit">
    <text evidence="1">Homomultimer; when bound to the RRE. Multimeric assembly is essential for activity and may involve XPO1. Binds to human KPNB1, XPO1, TNPO1, RANBP5 and IPO7. Interacts with the viral Integrase. Interacts with human KHDRBS1. Interacts with human NAP1; this interaction decreases Rev multimerization and stimulates its activity. Interacts with human DEAD-box helicases DDX3 and DDX24; these interactions may serve for viral RNA export to the cytoplasm and packaging, respectively. Interacts with human PSIP1; this interaction may inhibit HIV-1 DNA integration by promoting dissociation of the Integrase-LEDGF/p75 complex.</text>
</comment>
<comment type="subcellular location">
    <subcellularLocation>
        <location evidence="1">Host nucleus</location>
        <location evidence="1">Host nucleolus</location>
    </subcellularLocation>
    <subcellularLocation>
        <location evidence="1">Host cytoplasm</location>
    </subcellularLocation>
    <text evidence="1">The presence of both nuclear import and nuclear export signals leads to continuous shuttling between the nucleus and cytoplasm.</text>
</comment>
<comment type="domain">
    <text evidence="1">The RNA-binding motif binds to the RRE, a 240 bp stem-and-loop structure present in incompletely spliced viral pre-mRNAs. This region also contains the NLS which mediates nuclear localization via KPNB1 binding and, when the N-terminal sequence is present, nucleolar targeting. These overlapping functions prevent Rev bound to RRE from undesirable return to the nucleus. When Rev binds the RRE, the NLS becomes masked while the NES remains accessible. The leucine-rich NES mediates binding to human XPO1.</text>
</comment>
<comment type="PTM">
    <text evidence="1">Asymmetrically arginine dimethylated at one site by host PRMT6. Methylation impairs the RNA-binding activity and export of viral RNA from the nucleus to the cytoplasm.</text>
</comment>
<comment type="PTM">
    <text evidence="1">Phosphorylated by protein kinase CK2. Presence of, and maybe binding to the N-terminus of the regulatory beta subunit of CK2 is necessary for CK2-mediated Rev's phosphorylation.</text>
</comment>
<comment type="miscellaneous">
    <text evidence="1">HIV-1 lineages are divided in three main groups, M (for Major), O (for Outlier), and N (for New, or Non-M, Non-O). The vast majority of strains found worldwide belong to the group M. Group O seems to be endemic to and largely confined to Cameroon and neighboring countries in West Central Africa, where these viruses represent a small minority of HIV-1 strains. The group N is represented by a limited number of isolates from Cameroonian persons. The group M is further subdivided in 9 clades or subtypes (A to D, F to H, J and K).</text>
</comment>
<comment type="similarity">
    <text evidence="1">Belongs to the HIV-1 REV protein family.</text>
</comment>
<gene>
    <name evidence="1" type="primary">rev</name>
</gene>
<accession>Q9QSQ9</accession>
<keyword id="KW-0014">AIDS</keyword>
<keyword id="KW-1035">Host cytoplasm</keyword>
<keyword id="KW-1048">Host nucleus</keyword>
<keyword id="KW-0945">Host-virus interaction</keyword>
<keyword id="KW-0488">Methylation</keyword>
<keyword id="KW-0509">mRNA transport</keyword>
<keyword id="KW-0597">Phosphoprotein</keyword>
<keyword id="KW-1185">Reference proteome</keyword>
<keyword id="KW-0694">RNA-binding</keyword>
<keyword id="KW-0813">Transport</keyword>
<sequence>MAGRSGDSDTELLKAVKCIKILYQSNPYPKPEGTRQARRNRRRRWRARQRQIRALSDRILSSCLGRSEEPVPLQLPPLERLHINCSEDCGQGPEEGVGSSQISGESHAVLESGTKE</sequence>